<proteinExistence type="inferred from homology"/>
<dbReference type="EMBL" id="BX548174">
    <property type="protein sequence ID" value="CAE20128.1"/>
    <property type="molecule type" value="Genomic_DNA"/>
</dbReference>
<dbReference type="RefSeq" id="WP_011133296.1">
    <property type="nucleotide sequence ID" value="NC_005072.1"/>
</dbReference>
<dbReference type="SMR" id="Q7TU20"/>
<dbReference type="STRING" id="59919.PMM1669"/>
<dbReference type="KEGG" id="pmm:PMM1669"/>
<dbReference type="eggNOG" id="COG0509">
    <property type="taxonomic scope" value="Bacteria"/>
</dbReference>
<dbReference type="HOGENOM" id="CLU_097408_2_0_3"/>
<dbReference type="OrthoDB" id="9796712at2"/>
<dbReference type="Proteomes" id="UP000001026">
    <property type="component" value="Chromosome"/>
</dbReference>
<dbReference type="GO" id="GO:0005829">
    <property type="term" value="C:cytosol"/>
    <property type="evidence" value="ECO:0007669"/>
    <property type="project" value="TreeGrafter"/>
</dbReference>
<dbReference type="GO" id="GO:0005960">
    <property type="term" value="C:glycine cleavage complex"/>
    <property type="evidence" value="ECO:0007669"/>
    <property type="project" value="InterPro"/>
</dbReference>
<dbReference type="GO" id="GO:0019464">
    <property type="term" value="P:glycine decarboxylation via glycine cleavage system"/>
    <property type="evidence" value="ECO:0007669"/>
    <property type="project" value="UniProtKB-UniRule"/>
</dbReference>
<dbReference type="CDD" id="cd06848">
    <property type="entry name" value="GCS_H"/>
    <property type="match status" value="1"/>
</dbReference>
<dbReference type="Gene3D" id="2.40.50.100">
    <property type="match status" value="1"/>
</dbReference>
<dbReference type="HAMAP" id="MF_00272">
    <property type="entry name" value="GcvH"/>
    <property type="match status" value="1"/>
</dbReference>
<dbReference type="InterPro" id="IPR003016">
    <property type="entry name" value="2-oxoA_DH_lipoyl-BS"/>
</dbReference>
<dbReference type="InterPro" id="IPR000089">
    <property type="entry name" value="Biotin_lipoyl"/>
</dbReference>
<dbReference type="InterPro" id="IPR002930">
    <property type="entry name" value="GCV_H"/>
</dbReference>
<dbReference type="InterPro" id="IPR033753">
    <property type="entry name" value="GCV_H/Fam206"/>
</dbReference>
<dbReference type="InterPro" id="IPR017453">
    <property type="entry name" value="GCV_H_sub"/>
</dbReference>
<dbReference type="InterPro" id="IPR011053">
    <property type="entry name" value="Single_hybrid_motif"/>
</dbReference>
<dbReference type="NCBIfam" id="TIGR00527">
    <property type="entry name" value="gcvH"/>
    <property type="match status" value="1"/>
</dbReference>
<dbReference type="NCBIfam" id="NF002270">
    <property type="entry name" value="PRK01202.1"/>
    <property type="match status" value="1"/>
</dbReference>
<dbReference type="PANTHER" id="PTHR11715">
    <property type="entry name" value="GLYCINE CLEAVAGE SYSTEM H PROTEIN"/>
    <property type="match status" value="1"/>
</dbReference>
<dbReference type="PANTHER" id="PTHR11715:SF3">
    <property type="entry name" value="GLYCINE CLEAVAGE SYSTEM H PROTEIN-RELATED"/>
    <property type="match status" value="1"/>
</dbReference>
<dbReference type="Pfam" id="PF01597">
    <property type="entry name" value="GCV_H"/>
    <property type="match status" value="1"/>
</dbReference>
<dbReference type="SUPFAM" id="SSF51230">
    <property type="entry name" value="Single hybrid motif"/>
    <property type="match status" value="1"/>
</dbReference>
<dbReference type="PROSITE" id="PS50968">
    <property type="entry name" value="BIOTINYL_LIPOYL"/>
    <property type="match status" value="1"/>
</dbReference>
<dbReference type="PROSITE" id="PS00189">
    <property type="entry name" value="LIPOYL"/>
    <property type="match status" value="1"/>
</dbReference>
<feature type="chain" id="PRO_0000302418" description="Glycine cleavage system H protein">
    <location>
        <begin position="1"/>
        <end position="129"/>
    </location>
</feature>
<feature type="domain" description="Lipoyl-binding" evidence="2">
    <location>
        <begin position="24"/>
        <end position="106"/>
    </location>
</feature>
<feature type="modified residue" description="N6-lipoyllysine" evidence="1">
    <location>
        <position position="65"/>
    </location>
</feature>
<protein>
    <recommendedName>
        <fullName evidence="1">Glycine cleavage system H protein</fullName>
    </recommendedName>
</protein>
<evidence type="ECO:0000255" key="1">
    <source>
        <dbReference type="HAMAP-Rule" id="MF_00272"/>
    </source>
</evidence>
<evidence type="ECO:0000255" key="2">
    <source>
        <dbReference type="PROSITE-ProRule" id="PRU01066"/>
    </source>
</evidence>
<accession>Q7TU20</accession>
<gene>
    <name evidence="1" type="primary">gcvH</name>
    <name type="ordered locus">PMM1669</name>
</gene>
<name>GCSH_PROMP</name>
<organism>
    <name type="scientific">Prochlorococcus marinus subsp. pastoris (strain CCMP1986 / NIES-2087 / MED4)</name>
    <dbReference type="NCBI Taxonomy" id="59919"/>
    <lineage>
        <taxon>Bacteria</taxon>
        <taxon>Bacillati</taxon>
        <taxon>Cyanobacteriota</taxon>
        <taxon>Cyanophyceae</taxon>
        <taxon>Synechococcales</taxon>
        <taxon>Prochlorococcaceae</taxon>
        <taxon>Prochlorococcus</taxon>
    </lineage>
</organism>
<comment type="function">
    <text evidence="1">The glycine cleavage system catalyzes the degradation of glycine. The H protein shuttles the methylamine group of glycine from the P protein to the T protein.</text>
</comment>
<comment type="cofactor">
    <cofactor evidence="1">
        <name>(R)-lipoate</name>
        <dbReference type="ChEBI" id="CHEBI:83088"/>
    </cofactor>
    <text evidence="1">Binds 1 lipoyl cofactor covalently.</text>
</comment>
<comment type="subunit">
    <text evidence="1">The glycine cleavage system is composed of four proteins: P, T, L and H.</text>
</comment>
<comment type="similarity">
    <text evidence="1">Belongs to the GcvH family.</text>
</comment>
<keyword id="KW-0450">Lipoyl</keyword>
<sequence>MSYKFPNYLRYADTHEYVKEENGLFKIGVSEFAIDQLGDIVFVELVEKGTNLQKGETFGTIESVKAVEEVYLPFSGEVISVNEGVIDNPEILQNDPIGDGWLLIIKSESNVLLDELMNSDEYKSKVVPN</sequence>
<reference key="1">
    <citation type="journal article" date="2003" name="Nature">
        <title>Genome divergence in two Prochlorococcus ecotypes reflects oceanic niche differentiation.</title>
        <authorList>
            <person name="Rocap G."/>
            <person name="Larimer F.W."/>
            <person name="Lamerdin J.E."/>
            <person name="Malfatti S."/>
            <person name="Chain P."/>
            <person name="Ahlgren N.A."/>
            <person name="Arellano A."/>
            <person name="Coleman M."/>
            <person name="Hauser L."/>
            <person name="Hess W.R."/>
            <person name="Johnson Z.I."/>
            <person name="Land M.L."/>
            <person name="Lindell D."/>
            <person name="Post A.F."/>
            <person name="Regala W."/>
            <person name="Shah M."/>
            <person name="Shaw S.L."/>
            <person name="Steglich C."/>
            <person name="Sullivan M.B."/>
            <person name="Ting C.S."/>
            <person name="Tolonen A."/>
            <person name="Webb E.A."/>
            <person name="Zinser E.R."/>
            <person name="Chisholm S.W."/>
        </authorList>
    </citation>
    <scope>NUCLEOTIDE SEQUENCE [LARGE SCALE GENOMIC DNA]</scope>
    <source>
        <strain>CCMP1986 / NIES-2087 / MED4</strain>
    </source>
</reference>